<organism>
    <name type="scientific">Homo sapiens</name>
    <name type="common">Human</name>
    <dbReference type="NCBI Taxonomy" id="9606"/>
    <lineage>
        <taxon>Eukaryota</taxon>
        <taxon>Metazoa</taxon>
        <taxon>Chordata</taxon>
        <taxon>Craniata</taxon>
        <taxon>Vertebrata</taxon>
        <taxon>Euteleostomi</taxon>
        <taxon>Mammalia</taxon>
        <taxon>Eutheria</taxon>
        <taxon>Euarchontoglires</taxon>
        <taxon>Primates</taxon>
        <taxon>Haplorrhini</taxon>
        <taxon>Catarrhini</taxon>
        <taxon>Hominidae</taxon>
        <taxon>Homo</taxon>
    </lineage>
</organism>
<protein>
    <recommendedName>
        <fullName>Caprin-2</fullName>
    </recommendedName>
    <alternativeName>
        <fullName>C1q domain-containing protein 1</fullName>
    </alternativeName>
    <alternativeName>
        <fullName>Cytoplasmic activation/proliferation-associated protein 2</fullName>
    </alternativeName>
    <alternativeName>
        <fullName>Gastric cancer multidrug resistance-associated protein</fullName>
    </alternativeName>
    <alternativeName>
        <fullName>Protein EEG-1</fullName>
    </alternativeName>
    <alternativeName>
        <fullName>RNA granule protein 140</fullName>
    </alternativeName>
</protein>
<feature type="chain" id="PRO_0000302082" description="Caprin-2">
    <location>
        <begin position="1"/>
        <end position="1127"/>
    </location>
</feature>
<feature type="domain" description="C1q" evidence="3">
    <location>
        <begin position="993"/>
        <end position="1127"/>
    </location>
</feature>
<feature type="region of interest" description="Disordered" evidence="4">
    <location>
        <begin position="67"/>
        <end position="108"/>
    </location>
</feature>
<feature type="region of interest" description="Disordered" evidence="4">
    <location>
        <begin position="382"/>
        <end position="614"/>
    </location>
</feature>
<feature type="region of interest" description="Disordered" evidence="4">
    <location>
        <begin position="642"/>
        <end position="753"/>
    </location>
</feature>
<feature type="region of interest" description="Disordered" evidence="4">
    <location>
        <begin position="922"/>
        <end position="975"/>
    </location>
</feature>
<feature type="coiled-coil region" evidence="2">
    <location>
        <begin position="129"/>
        <end position="156"/>
    </location>
</feature>
<feature type="coiled-coil region" evidence="2">
    <location>
        <begin position="194"/>
        <end position="216"/>
    </location>
</feature>
<feature type="compositionally biased region" description="Polar residues" evidence="4">
    <location>
        <begin position="99"/>
        <end position="108"/>
    </location>
</feature>
<feature type="compositionally biased region" description="Basic and acidic residues" evidence="4">
    <location>
        <begin position="402"/>
        <end position="432"/>
    </location>
</feature>
<feature type="compositionally biased region" description="Basic and acidic residues" evidence="4">
    <location>
        <begin position="440"/>
        <end position="464"/>
    </location>
</feature>
<feature type="compositionally biased region" description="Polar residues" evidence="4">
    <location>
        <begin position="512"/>
        <end position="531"/>
    </location>
</feature>
<feature type="compositionally biased region" description="Polar residues" evidence="4">
    <location>
        <begin position="544"/>
        <end position="567"/>
    </location>
</feature>
<feature type="compositionally biased region" description="Basic and acidic residues" evidence="4">
    <location>
        <begin position="588"/>
        <end position="597"/>
    </location>
</feature>
<feature type="compositionally biased region" description="Polar residues" evidence="4">
    <location>
        <begin position="665"/>
        <end position="714"/>
    </location>
</feature>
<feature type="compositionally biased region" description="Polar residues" evidence="4">
    <location>
        <begin position="741"/>
        <end position="753"/>
    </location>
</feature>
<feature type="compositionally biased region" description="Polar residues" evidence="4">
    <location>
        <begin position="956"/>
        <end position="970"/>
    </location>
</feature>
<feature type="binding site" evidence="10 27">
    <location>
        <position position="1078"/>
    </location>
    <ligand>
        <name>Ca(2+)</name>
        <dbReference type="ChEBI" id="CHEBI:29108"/>
        <label>1</label>
        <note>ligand shared between two neighboring subunits</note>
    </ligand>
</feature>
<feature type="binding site" evidence="10 27">
    <location>
        <position position="1084"/>
    </location>
    <ligand>
        <name>Ca(2+)</name>
        <dbReference type="ChEBI" id="CHEBI:29108"/>
        <label>2</label>
        <note>ligand shared between two neighboring subunits</note>
    </ligand>
</feature>
<feature type="modified residue" description="Phosphoserine" evidence="1">
    <location>
        <position position="948"/>
    </location>
</feature>
<feature type="modified residue" description="Phosphoserine" evidence="1">
    <location>
        <position position="949"/>
    </location>
</feature>
<feature type="splice variant" id="VSP_052531" description="In isoform 4." evidence="14">
    <location>
        <begin position="1"/>
        <end position="333"/>
    </location>
</feature>
<feature type="splice variant" id="VSP_052532" description="In isoform 5." evidence="13">
    <original>SVEDQMEQS</original>
    <variation>RQTLEGSTV</variation>
    <location>
        <begin position="270"/>
        <end position="278"/>
    </location>
</feature>
<feature type="splice variant" id="VSP_052533" description="In isoform 5." evidence="13">
    <location>
        <begin position="279"/>
        <end position="1127"/>
    </location>
</feature>
<feature type="splice variant" id="VSP_052534" description="In isoform 6." evidence="17">
    <original>P</original>
    <variation>S</variation>
    <location>
        <position position="596"/>
    </location>
</feature>
<feature type="splice variant" id="VSP_052535" description="In isoform 6." evidence="17">
    <location>
        <begin position="597"/>
        <end position="1127"/>
    </location>
</feature>
<feature type="splice variant" id="VSP_043293" description="In isoform 10." evidence="15">
    <location>
        <begin position="682"/>
        <end position="716"/>
    </location>
</feature>
<feature type="splice variant" id="VSP_052536" description="In isoform 2." evidence="13">
    <location>
        <begin position="717"/>
        <end position="765"/>
    </location>
</feature>
<feature type="splice variant" id="VSP_052537" description="In isoform 7 and isoform 10." evidence="15 16">
    <location>
        <begin position="823"/>
        <end position="843"/>
    </location>
</feature>
<feature type="splice variant" id="VSP_027920" description="In isoform 2, isoform 3 and isoform 9." evidence="13 15">
    <location>
        <position position="823"/>
    </location>
</feature>
<feature type="splice variant" id="VSP_052538" description="In isoform 3, isoform 7 and isoform 10." evidence="15 16">
    <original>GWSDSSQVSSPERDNETFNSGD</original>
    <variation>NCFIMRNSLLLIKQQGGVILLR</variation>
    <location>
        <begin position="940"/>
        <end position="961"/>
    </location>
</feature>
<feature type="splice variant" id="VSP_052539" description="In isoform 3, isoform 7 and isoform 10." evidence="15 16">
    <location>
        <begin position="962"/>
        <end position="1127"/>
    </location>
</feature>
<feature type="sequence variant" id="VAR_048445" description="In dbSNP:rs17688567.">
    <original>P</original>
    <variation>S</variation>
    <location>
        <position position="114"/>
    </location>
</feature>
<feature type="sequence variant" id="VAR_048446" description="In dbSNP:rs12146709.">
    <original>K</original>
    <variation>R</variation>
    <location>
        <position position="237"/>
    </location>
</feature>
<feature type="sequence variant" id="VAR_034939" description="In dbSNP:rs2304630." evidence="6">
    <original>M</original>
    <variation>V</variation>
    <location>
        <position position="519"/>
    </location>
</feature>
<feature type="sequence variant" id="VAR_048447" description="In dbSNP:rs2304628.">
    <original>S</original>
    <variation>L</variation>
    <location>
        <position position="655"/>
    </location>
</feature>
<feature type="mutagenesis site" description="Impaired homotrimer formation. No effect on LRP6 binding although LRP6 phosphorylation is significantly reduced." evidence="10">
    <original>I</original>
    <variation>R</variation>
    <location>
        <position position="1048"/>
    </location>
</feature>
<feature type="mutagenesis site" description="Loss of calcium binding and increased homotrimer stability; when associated with Ala-1084." evidence="10">
    <original>D</original>
    <variation>A</variation>
    <location>
        <position position="1078"/>
    </location>
</feature>
<feature type="mutagenesis site" description="Loss of calcium binding and increased homotrimer stability; when associated with Ala-1078." evidence="10">
    <original>E</original>
    <variation>A</variation>
    <location>
        <position position="1084"/>
    </location>
</feature>
<feature type="mutagenesis site" description="Impaired homotrimer formation. No effect on LRP6 binding although LRP6 phosphorylation is significantly reduced." evidence="10">
    <original>I</original>
    <variation>S</variation>
    <location>
        <position position="1091"/>
    </location>
</feature>
<feature type="mutagenesis site" description="No effect on homotrimer formation." evidence="10">
    <original>W</original>
    <variation>S</variation>
    <location>
        <position position="1114"/>
    </location>
</feature>
<feature type="mutagenesis site" description="No effect on homotrimer formation." evidence="10">
    <original>Y</original>
    <variation>S</variation>
    <location>
        <position position="1122"/>
    </location>
</feature>
<feature type="sequence conflict" description="In Ref. 4; BAB13830." evidence="18" ref="4">
    <original>Y</original>
    <variation>D</variation>
    <location>
        <position position="298"/>
    </location>
</feature>
<feature type="sequence conflict" description="In Ref. 5; AAK83153." evidence="18" ref="5">
    <original>P</original>
    <variation>S</variation>
    <location>
        <position position="320"/>
    </location>
</feature>
<feature type="sequence conflict" description="In Ref. 4; BAB13830." evidence="18" ref="4">
    <original>V</original>
    <variation>A</variation>
    <location>
        <position position="595"/>
    </location>
</feature>
<feature type="helix" evidence="29">
    <location>
        <begin position="114"/>
        <end position="152"/>
    </location>
</feature>
<feature type="helix" evidence="29">
    <location>
        <begin position="158"/>
        <end position="165"/>
    </location>
</feature>
<feature type="helix" evidence="29">
    <location>
        <begin position="167"/>
        <end position="186"/>
    </location>
</feature>
<feature type="helix" evidence="29">
    <location>
        <begin position="188"/>
        <end position="227"/>
    </location>
</feature>
<feature type="helix" evidence="29">
    <location>
        <begin position="230"/>
        <end position="238"/>
    </location>
</feature>
<feature type="strand" evidence="30">
    <location>
        <begin position="240"/>
        <end position="242"/>
    </location>
</feature>
<feature type="helix" evidence="29">
    <location>
        <begin position="248"/>
        <end position="261"/>
    </location>
</feature>
<feature type="helix" evidence="29">
    <location>
        <begin position="271"/>
        <end position="287"/>
    </location>
</feature>
<feature type="helix" evidence="29">
    <location>
        <begin position="298"/>
        <end position="311"/>
    </location>
</feature>
<feature type="helix" evidence="29">
    <location>
        <begin position="313"/>
        <end position="315"/>
    </location>
</feature>
<feature type="strand" evidence="28">
    <location>
        <begin position="999"/>
        <end position="1004"/>
    </location>
</feature>
<feature type="strand" evidence="28">
    <location>
        <begin position="1011"/>
        <end position="1016"/>
    </location>
</feature>
<feature type="strand" evidence="28">
    <location>
        <begin position="1020"/>
        <end position="1026"/>
    </location>
</feature>
<feature type="turn" evidence="28">
    <location>
        <begin position="1032"/>
        <end position="1035"/>
    </location>
</feature>
<feature type="strand" evidence="28">
    <location>
        <begin position="1036"/>
        <end position="1038"/>
    </location>
</feature>
<feature type="strand" evidence="28">
    <location>
        <begin position="1041"/>
        <end position="1053"/>
    </location>
</feature>
<feature type="strand" evidence="28">
    <location>
        <begin position="1055"/>
        <end position="1058"/>
    </location>
</feature>
<feature type="strand" evidence="28">
    <location>
        <begin position="1060"/>
        <end position="1066"/>
    </location>
</feature>
<feature type="strand" evidence="28">
    <location>
        <begin position="1069"/>
        <end position="1076"/>
    </location>
</feature>
<feature type="strand" evidence="28">
    <location>
        <begin position="1079"/>
        <end position="1082"/>
    </location>
</feature>
<feature type="strand" evidence="28">
    <location>
        <begin position="1085"/>
        <end position="1094"/>
    </location>
</feature>
<feature type="strand" evidence="28">
    <location>
        <begin position="1099"/>
        <end position="1107"/>
    </location>
</feature>
<feature type="strand" evidence="28">
    <location>
        <begin position="1117"/>
        <end position="1126"/>
    </location>
</feature>
<comment type="function">
    <text evidence="1 5 9 11">Promotes phosphorylation of the Wnt coreceptor LRP6, leading to increased activity of the canonical Wnt signaling pathway (PubMed:18762581). Facilitates constitutive LRP6 phosphorylation by CDK14/CCNY during G2/M stage of the cell cycle, which may potentiate cells for Wnt signaling (PubMed:27821587). May regulate the transport and translation of mRNAs, modulating for instance the expression of proteins involved in synaptic plasticity in neurons (By similarity). Involved in regulation of growth as erythroblasts shift from a highly proliferative state towards their terminal phase of differentiation (PubMed:14593112). May be involved in apoptosis (PubMed:14593112).</text>
</comment>
<comment type="subunit">
    <text evidence="9 10">Homotrimer; via C1q domain (PubMed:25331957). Found in a complex with LRP6, CCNY and CDK14 during G2/M stage; CAPRIN2 functions as a scaffold for the complex by binding to CCNY via its N terminus and to CDK14 via its C terminus (PubMed:27821587). Interacts with LRP5 (PubMed:18762581). Interacts with LRP6 (PubMed:18762581, PubMed:25331957).</text>
</comment>
<comment type="interaction">
    <interactant intactId="EBI-6918449">
        <id>Q6IMN6</id>
    </interactant>
    <interactant intactId="EBI-2466421">
        <id>O75197</id>
        <label>LRP5</label>
    </interactant>
    <organismsDiffer>false</organismsDiffer>
    <experiments>3</experiments>
</comment>
<comment type="interaction">
    <interactant intactId="EBI-6918449">
        <id>Q6IMN6</id>
    </interactant>
    <interactant intactId="EBI-597835">
        <id>P50542</id>
        <label>PEX5</label>
    </interactant>
    <organismsDiffer>false</organismsDiffer>
    <experiments>3</experiments>
</comment>
<comment type="interaction">
    <interactant intactId="EBI-12422830">
        <id>Q6IMN6-3</id>
    </interactant>
    <interactant intactId="EBI-16439278">
        <id>Q6FHY5</id>
        <label>MEOX2</label>
    </interactant>
    <organismsDiffer>false</organismsDiffer>
    <experiments>3</experiments>
</comment>
<comment type="subcellular location">
    <molecule>Isoform 1</molecule>
    <subcellularLocation>
        <location>Cytoplasm</location>
    </subcellularLocation>
</comment>
<comment type="subcellular location">
    <molecule>Isoform 2</molecule>
    <subcellularLocation>
        <location>Mitochondrion</location>
    </subcellularLocation>
    <subcellularLocation>
        <location>Cytoplasm</location>
    </subcellularLocation>
    <text>Expressed throughout the cytoplasm.</text>
</comment>
<comment type="subcellular location">
    <molecule>Isoform 5</molecule>
    <subcellularLocation>
        <location>Mitochondrion</location>
    </subcellularLocation>
    <text>Colocalizes with aggregated mitochondria.</text>
</comment>
<comment type="subcellular location">
    <subcellularLocation>
        <location evidence="19">Cell membrane</location>
        <topology evidence="18">Peripheral membrane protein</topology>
    </subcellularLocation>
</comment>
<comment type="alternative products">
    <event type="alternative splicing"/>
    <isoform>
        <id>Q6IMN6-1</id>
        <name evidence="8">1</name>
        <sequence type="displayed"/>
    </isoform>
    <isoform>
        <id>Q6IMN6-2</id>
        <name evidence="5">2</name>
        <name evidence="5">EEG-1L</name>
        <sequence type="described" ref="VSP_052536 VSP_027920"/>
    </isoform>
    <isoform>
        <id>Q6IMN6-3</id>
        <name evidence="7">3</name>
        <sequence type="described" ref="VSP_027920 VSP_052538 VSP_052539"/>
    </isoform>
    <isoform>
        <id>Q6IMN6-4</id>
        <name evidence="6">4</name>
        <sequence type="described" ref="VSP_052531"/>
    </isoform>
    <isoform>
        <id>Q6IMN6-5</id>
        <name evidence="5">5</name>
        <name evidence="5">EEG-1S</name>
        <sequence type="described" ref="VSP_052532 VSP_052533"/>
    </isoform>
    <isoform>
        <id>Q6IMN6-6</id>
        <name evidence="12">6</name>
        <sequence type="described" ref="VSP_052534 VSP_052535"/>
    </isoform>
    <isoform>
        <id>Q6IMN6-7</id>
        <name>7</name>
        <sequence type="described" ref="VSP_052537 VSP_052538 VSP_052539"/>
    </isoform>
    <isoform>
        <id>Q6IMN6-9</id>
        <name>9</name>
        <sequence type="described" ref="VSP_027920"/>
    </isoform>
    <isoform>
        <id>Q6IMN6-10</id>
        <name>10</name>
        <sequence type="described" ref="VSP_043293 VSP_052537 VSP_052538 VSP_052539"/>
    </isoform>
</comment>
<comment type="tissue specificity">
    <text evidence="5">Detected in all tissues tested with highest levels of expression in brain and spleen.</text>
</comment>
<comment type="developmental stage">
    <text evidence="5">Expression is highly regulated during erythroid development with increased expression at the stage of differentiation associated with the onset of global nuclear condensation and reduced cell proliferation.</text>
</comment>
<comment type="domain">
    <text evidence="9">The C1q domain is essential for the function in Wnt signaling.</text>
</comment>
<comment type="similarity">
    <text evidence="18">Belongs to the caprin family.</text>
</comment>
<comment type="sequence caution" evidence="18">
    <conflict type="erroneous initiation">
        <sequence resource="EMBL-CDS" id="AAK83153"/>
    </conflict>
    <text>Truncated N-terminus.</text>
</comment>
<reference evidence="18 23" key="1">
    <citation type="journal article" date="2004" name="J. Biol. Chem.">
        <title>Cloning and characterization of a gene expressed during terminal differentiation that encodes a novel inhibitor of growth.</title>
        <authorList>
            <person name="Aerbajinai W."/>
            <person name="Lee Y.T."/>
            <person name="Wojda U."/>
            <person name="Barr V.A."/>
            <person name="Miller J.L."/>
        </authorList>
    </citation>
    <scope>NUCLEOTIDE SEQUENCE [MRNA] (ISOFORMS 2 AND 5)</scope>
    <scope>FUNCTION</scope>
    <scope>SUBCELLULAR LOCATION</scope>
    <scope>TISSUE SPECIFICITY</scope>
    <scope>DEVELOPMENTAL STAGE</scope>
    <source>
        <tissue evidence="23">Erythroblast</tissue>
    </source>
</reference>
<reference evidence="18" key="2">
    <citation type="journal article" date="2006" name="Nature">
        <title>The finished DNA sequence of human chromosome 12.</title>
        <authorList>
            <person name="Scherer S.E."/>
            <person name="Muzny D.M."/>
            <person name="Buhay C.J."/>
            <person name="Chen R."/>
            <person name="Cree A."/>
            <person name="Ding Y."/>
            <person name="Dugan-Rocha S."/>
            <person name="Gill R."/>
            <person name="Gunaratne P."/>
            <person name="Harris R.A."/>
            <person name="Hawes A.C."/>
            <person name="Hernandez J."/>
            <person name="Hodgson A.V."/>
            <person name="Hume J."/>
            <person name="Jackson A."/>
            <person name="Khan Z.M."/>
            <person name="Kovar-Smith C."/>
            <person name="Lewis L.R."/>
            <person name="Lozado R.J."/>
            <person name="Metzker M.L."/>
            <person name="Milosavljevic A."/>
            <person name="Miner G.R."/>
            <person name="Montgomery K.T."/>
            <person name="Morgan M.B."/>
            <person name="Nazareth L.V."/>
            <person name="Scott G."/>
            <person name="Sodergren E."/>
            <person name="Song X.-Z."/>
            <person name="Steffen D."/>
            <person name="Lovering R.C."/>
            <person name="Wheeler D.A."/>
            <person name="Worley K.C."/>
            <person name="Yuan Y."/>
            <person name="Zhang Z."/>
            <person name="Adams C.Q."/>
            <person name="Ansari-Lari M.A."/>
            <person name="Ayele M."/>
            <person name="Brown M.J."/>
            <person name="Chen G."/>
            <person name="Chen Z."/>
            <person name="Clerc-Blankenburg K.P."/>
            <person name="Davis C."/>
            <person name="Delgado O."/>
            <person name="Dinh H.H."/>
            <person name="Draper H."/>
            <person name="Gonzalez-Garay M.L."/>
            <person name="Havlak P."/>
            <person name="Jackson L.R."/>
            <person name="Jacob L.S."/>
            <person name="Kelly S.H."/>
            <person name="Li L."/>
            <person name="Li Z."/>
            <person name="Liu J."/>
            <person name="Liu W."/>
            <person name="Lu J."/>
            <person name="Maheshwari M."/>
            <person name="Nguyen B.-V."/>
            <person name="Okwuonu G.O."/>
            <person name="Pasternak S."/>
            <person name="Perez L.M."/>
            <person name="Plopper F.J.H."/>
            <person name="Santibanez J."/>
            <person name="Shen H."/>
            <person name="Tabor P.E."/>
            <person name="Verduzco D."/>
            <person name="Waldron L."/>
            <person name="Wang Q."/>
            <person name="Williams G.A."/>
            <person name="Zhang J."/>
            <person name="Zhou J."/>
            <person name="Allen C.C."/>
            <person name="Amin A.G."/>
            <person name="Anyalebechi V."/>
            <person name="Bailey M."/>
            <person name="Barbaria J.A."/>
            <person name="Bimage K.E."/>
            <person name="Bryant N.P."/>
            <person name="Burch P.E."/>
            <person name="Burkett C.E."/>
            <person name="Burrell K.L."/>
            <person name="Calderon E."/>
            <person name="Cardenas V."/>
            <person name="Carter K."/>
            <person name="Casias K."/>
            <person name="Cavazos I."/>
            <person name="Cavazos S.R."/>
            <person name="Ceasar H."/>
            <person name="Chacko J."/>
            <person name="Chan S.N."/>
            <person name="Chavez D."/>
            <person name="Christopoulos C."/>
            <person name="Chu J."/>
            <person name="Cockrell R."/>
            <person name="Cox C.D."/>
            <person name="Dang M."/>
            <person name="Dathorne S.R."/>
            <person name="David R."/>
            <person name="Davis C.M."/>
            <person name="Davy-Carroll L."/>
            <person name="Deshazo D.R."/>
            <person name="Donlin J.E."/>
            <person name="D'Souza L."/>
            <person name="Eaves K.A."/>
            <person name="Egan A."/>
            <person name="Emery-Cohen A.J."/>
            <person name="Escotto M."/>
            <person name="Flagg N."/>
            <person name="Forbes L.D."/>
            <person name="Gabisi A.M."/>
            <person name="Garza M."/>
            <person name="Hamilton C."/>
            <person name="Henderson N."/>
            <person name="Hernandez O."/>
            <person name="Hines S."/>
            <person name="Hogues M.E."/>
            <person name="Huang M."/>
            <person name="Idlebird D.G."/>
            <person name="Johnson R."/>
            <person name="Jolivet A."/>
            <person name="Jones S."/>
            <person name="Kagan R."/>
            <person name="King L.M."/>
            <person name="Leal B."/>
            <person name="Lebow H."/>
            <person name="Lee S."/>
            <person name="LeVan J.M."/>
            <person name="Lewis L.C."/>
            <person name="London P."/>
            <person name="Lorensuhewa L.M."/>
            <person name="Loulseged H."/>
            <person name="Lovett D.A."/>
            <person name="Lucier A."/>
            <person name="Lucier R.L."/>
            <person name="Ma J."/>
            <person name="Madu R.C."/>
            <person name="Mapua P."/>
            <person name="Martindale A.D."/>
            <person name="Martinez E."/>
            <person name="Massey E."/>
            <person name="Mawhiney S."/>
            <person name="Meador M.G."/>
            <person name="Mendez S."/>
            <person name="Mercado C."/>
            <person name="Mercado I.C."/>
            <person name="Merritt C.E."/>
            <person name="Miner Z.L."/>
            <person name="Minja E."/>
            <person name="Mitchell T."/>
            <person name="Mohabbat F."/>
            <person name="Mohabbat K."/>
            <person name="Montgomery B."/>
            <person name="Moore N."/>
            <person name="Morris S."/>
            <person name="Munidasa M."/>
            <person name="Ngo R.N."/>
            <person name="Nguyen N.B."/>
            <person name="Nickerson E."/>
            <person name="Nwaokelemeh O.O."/>
            <person name="Nwokenkwo S."/>
            <person name="Obregon M."/>
            <person name="Oguh M."/>
            <person name="Oragunye N."/>
            <person name="Oviedo R.J."/>
            <person name="Parish B.J."/>
            <person name="Parker D.N."/>
            <person name="Parrish J."/>
            <person name="Parks K.L."/>
            <person name="Paul H.A."/>
            <person name="Payton B.A."/>
            <person name="Perez A."/>
            <person name="Perrin W."/>
            <person name="Pickens A."/>
            <person name="Primus E.L."/>
            <person name="Pu L.-L."/>
            <person name="Puazo M."/>
            <person name="Quiles M.M."/>
            <person name="Quiroz J.B."/>
            <person name="Rabata D."/>
            <person name="Reeves K."/>
            <person name="Ruiz S.J."/>
            <person name="Shao H."/>
            <person name="Sisson I."/>
            <person name="Sonaike T."/>
            <person name="Sorelle R.P."/>
            <person name="Sutton A.E."/>
            <person name="Svatek A.F."/>
            <person name="Svetz L.A."/>
            <person name="Tamerisa K.S."/>
            <person name="Taylor T.R."/>
            <person name="Teague B."/>
            <person name="Thomas N."/>
            <person name="Thorn R.D."/>
            <person name="Trejos Z.Y."/>
            <person name="Trevino B.K."/>
            <person name="Ukegbu O.N."/>
            <person name="Urban J.B."/>
            <person name="Vasquez L.I."/>
            <person name="Vera V.A."/>
            <person name="Villasana D.M."/>
            <person name="Wang L."/>
            <person name="Ward-Moore S."/>
            <person name="Warren J.T."/>
            <person name="Wei X."/>
            <person name="White F."/>
            <person name="Williamson A.L."/>
            <person name="Wleczyk R."/>
            <person name="Wooden H.S."/>
            <person name="Wooden S.H."/>
            <person name="Yen J."/>
            <person name="Yoon L."/>
            <person name="Yoon V."/>
            <person name="Zorrilla S.E."/>
            <person name="Nelson D."/>
            <person name="Kucherlapati R."/>
            <person name="Weinstock G."/>
            <person name="Gibbs R.A."/>
        </authorList>
    </citation>
    <scope>NUCLEOTIDE SEQUENCE [LARGE SCALE GENOMIC DNA]</scope>
</reference>
<reference evidence="18 21" key="3">
    <citation type="journal article" date="2004" name="Genome Res.">
        <title>The status, quality, and expansion of the NIH full-length cDNA project: the Mammalian Gene Collection (MGC).</title>
        <authorList>
            <consortium name="The MGC Project Team"/>
        </authorList>
    </citation>
    <scope>NUCLEOTIDE SEQUENCE [LARGE SCALE MRNA] (ISOFORMS 3 AND 10)</scope>
    <scope>NUCLEOTIDE SEQUENCE [LARGE SCALE MRNA] OF 844-1127 (ISOFORMS 1/2/4)</scope>
    <source>
        <tissue evidence="20">Brain</tissue>
        <tissue>Uterus</tissue>
    </source>
</reference>
<reference evidence="18 24" key="4">
    <citation type="journal article" date="2004" name="Nat. Genet.">
        <title>Complete sequencing and characterization of 21,243 full-length human cDNAs.</title>
        <authorList>
            <person name="Ota T."/>
            <person name="Suzuki Y."/>
            <person name="Nishikawa T."/>
            <person name="Otsuki T."/>
            <person name="Sugiyama T."/>
            <person name="Irie R."/>
            <person name="Wakamatsu A."/>
            <person name="Hayashi K."/>
            <person name="Sato H."/>
            <person name="Nagai K."/>
            <person name="Kimura K."/>
            <person name="Makita H."/>
            <person name="Sekine M."/>
            <person name="Obayashi M."/>
            <person name="Nishi T."/>
            <person name="Shibahara T."/>
            <person name="Tanaka T."/>
            <person name="Ishii S."/>
            <person name="Yamamoto J."/>
            <person name="Saito K."/>
            <person name="Kawai Y."/>
            <person name="Isono Y."/>
            <person name="Nakamura Y."/>
            <person name="Nagahari K."/>
            <person name="Murakami K."/>
            <person name="Yasuda T."/>
            <person name="Iwayanagi T."/>
            <person name="Wagatsuma M."/>
            <person name="Shiratori A."/>
            <person name="Sudo H."/>
            <person name="Hosoiri T."/>
            <person name="Kaku Y."/>
            <person name="Kodaira H."/>
            <person name="Kondo H."/>
            <person name="Sugawara M."/>
            <person name="Takahashi M."/>
            <person name="Kanda K."/>
            <person name="Yokoi T."/>
            <person name="Furuya T."/>
            <person name="Kikkawa E."/>
            <person name="Omura Y."/>
            <person name="Abe K."/>
            <person name="Kamihara K."/>
            <person name="Katsuta N."/>
            <person name="Sato K."/>
            <person name="Tanikawa M."/>
            <person name="Yamazaki M."/>
            <person name="Ninomiya K."/>
            <person name="Ishibashi T."/>
            <person name="Yamashita H."/>
            <person name="Murakawa K."/>
            <person name="Fujimori K."/>
            <person name="Tanai H."/>
            <person name="Kimata M."/>
            <person name="Watanabe M."/>
            <person name="Hiraoka S."/>
            <person name="Chiba Y."/>
            <person name="Ishida S."/>
            <person name="Ono Y."/>
            <person name="Takiguchi S."/>
            <person name="Watanabe S."/>
            <person name="Yosida M."/>
            <person name="Hotuta T."/>
            <person name="Kusano J."/>
            <person name="Kanehori K."/>
            <person name="Takahashi-Fujii A."/>
            <person name="Hara H."/>
            <person name="Tanase T.-O."/>
            <person name="Nomura Y."/>
            <person name="Togiya S."/>
            <person name="Komai F."/>
            <person name="Hara R."/>
            <person name="Takeuchi K."/>
            <person name="Arita M."/>
            <person name="Imose N."/>
            <person name="Musashino K."/>
            <person name="Yuuki H."/>
            <person name="Oshima A."/>
            <person name="Sasaki N."/>
            <person name="Aotsuka S."/>
            <person name="Yoshikawa Y."/>
            <person name="Matsunawa H."/>
            <person name="Ichihara T."/>
            <person name="Shiohata N."/>
            <person name="Sano S."/>
            <person name="Moriya S."/>
            <person name="Momiyama H."/>
            <person name="Satoh N."/>
            <person name="Takami S."/>
            <person name="Terashima Y."/>
            <person name="Suzuki O."/>
            <person name="Nakagawa S."/>
            <person name="Senoh A."/>
            <person name="Mizoguchi H."/>
            <person name="Goto Y."/>
            <person name="Shimizu F."/>
            <person name="Wakebe H."/>
            <person name="Hishigaki H."/>
            <person name="Watanabe T."/>
            <person name="Sugiyama A."/>
            <person name="Takemoto M."/>
            <person name="Kawakami B."/>
            <person name="Yamazaki M."/>
            <person name="Watanabe K."/>
            <person name="Kumagai A."/>
            <person name="Itakura S."/>
            <person name="Fukuzumi Y."/>
            <person name="Fujimori Y."/>
            <person name="Komiyama M."/>
            <person name="Tashiro H."/>
            <person name="Tanigami A."/>
            <person name="Fujiwara T."/>
            <person name="Ono T."/>
            <person name="Yamada K."/>
            <person name="Fujii Y."/>
            <person name="Ozaki K."/>
            <person name="Hirao M."/>
            <person name="Ohmori Y."/>
            <person name="Kawabata A."/>
            <person name="Hikiji T."/>
            <person name="Kobatake N."/>
            <person name="Inagaki H."/>
            <person name="Ikema Y."/>
            <person name="Okamoto S."/>
            <person name="Okitani R."/>
            <person name="Kawakami T."/>
            <person name="Noguchi S."/>
            <person name="Itoh T."/>
            <person name="Shigeta K."/>
            <person name="Senba T."/>
            <person name="Matsumura K."/>
            <person name="Nakajima Y."/>
            <person name="Mizuno T."/>
            <person name="Morinaga M."/>
            <person name="Sasaki M."/>
            <person name="Togashi T."/>
            <person name="Oyama M."/>
            <person name="Hata H."/>
            <person name="Watanabe M."/>
            <person name="Komatsu T."/>
            <person name="Mizushima-Sugano J."/>
            <person name="Satoh T."/>
            <person name="Shirai Y."/>
            <person name="Takahashi Y."/>
            <person name="Nakagawa K."/>
            <person name="Okumura K."/>
            <person name="Nagase T."/>
            <person name="Nomura N."/>
            <person name="Kikuchi H."/>
            <person name="Masuho Y."/>
            <person name="Yamashita R."/>
            <person name="Nakai K."/>
            <person name="Yada T."/>
            <person name="Nakamura Y."/>
            <person name="Ohara O."/>
            <person name="Isogai T."/>
            <person name="Sugano S."/>
        </authorList>
    </citation>
    <scope>NUCLEOTIDE SEQUENCE [LARGE SCALE MRNA] OF 298-776 (ISOFORM 1)</scope>
    <scope>NUCLEOTIDE SEQUENCE [LARGE SCALE MRNA] OF 1-776 (ISOFORM 4)</scope>
    <scope>VARIANT VAL-519</scope>
    <source>
        <tissue evidence="24">Embryo</tissue>
        <tissue evidence="25">Small intestine</tissue>
    </source>
</reference>
<reference evidence="18 22" key="5">
    <citation type="submission" date="2000-12" db="EMBL/GenBank/DDBJ databases">
        <title>Isolation and functional characterization of a novel gene associated with gastric cancer multidrug resistance.</title>
        <authorList>
            <person name="Shi Y.-Q."/>
            <person name="Zhai H.-H."/>
            <person name="Han Y."/>
            <person name="Wang X."/>
            <person name="Wu H.-P."/>
            <person name="Fan D.-M."/>
        </authorList>
    </citation>
    <scope>NUCLEOTIDE SEQUENCE [MRNA] OF 319-1127 (ISOFORM 6)</scope>
</reference>
<reference key="6">
    <citation type="journal article" date="2007" name="BMC Genomics">
        <title>The full-ORF clone resource of the German cDNA consortium.</title>
        <authorList>
            <person name="Bechtel S."/>
            <person name="Rosenfelder H."/>
            <person name="Duda A."/>
            <person name="Schmidt C.P."/>
            <person name="Ernst U."/>
            <person name="Wellenreuther R."/>
            <person name="Mehrle A."/>
            <person name="Schuster C."/>
            <person name="Bahr A."/>
            <person name="Bloecker H."/>
            <person name="Heubner D."/>
            <person name="Hoerlein A."/>
            <person name="Michel G."/>
            <person name="Wedler H."/>
            <person name="Koehrer K."/>
            <person name="Ottenwaelder B."/>
            <person name="Poustka A."/>
            <person name="Wiemann S."/>
            <person name="Schupp I."/>
        </authorList>
    </citation>
    <scope>NUCLEOTIDE SEQUENCE [LARGE SCALE MRNA] OF 766-1127 (ISOFORM 7)</scope>
    <source>
        <tissue>Cerebellum</tissue>
    </source>
</reference>
<reference evidence="18 26" key="7">
    <citation type="journal article" date="2004" name="J. Immunol.">
        <title>Activation/division of lymphocytes results in increased levels of cytoplasmic activation/proliferation-associated protein-1: prototype of a new family of proteins.</title>
        <authorList>
            <person name="Grill B."/>
            <person name="Wilson G.M."/>
            <person name="Zhang K.-X."/>
            <person name="Wang B."/>
            <person name="Doyonnas R."/>
            <person name="Quadroni M."/>
            <person name="Schrader J.W."/>
        </authorList>
    </citation>
    <scope>IDENTIFICATION (ISOFORM 9)</scope>
</reference>
<reference key="8">
    <citation type="journal article" date="2008" name="J. Cell Biol.">
        <title>Caprin-2 enhances canonical Wnt signaling through regulating LRP5/6 phosphorylation.</title>
        <authorList>
            <person name="Ding Y."/>
            <person name="Xi Y."/>
            <person name="Chen T."/>
            <person name="Wang J.Y."/>
            <person name="Tao D.L."/>
            <person name="Wu Z.L."/>
            <person name="Li Y.P."/>
            <person name="Li C."/>
            <person name="Zeng R."/>
            <person name="Li L."/>
        </authorList>
    </citation>
    <scope>FUNCTION</scope>
    <scope>INTERACTION WITH LRP5 AND LRP6</scope>
    <scope>IDENTIFICATION BY MASS SPECTROMETRY</scope>
</reference>
<reference key="9">
    <citation type="journal article" date="2010" name="J. Biol. Chem.">
        <title>RNA granule protein 140 (RNG140), a paralog of RNG105 localized to distinct RNA granules in neuronal dendrites in the adult vertebrate brain.</title>
        <authorList>
            <person name="Shiina N."/>
            <person name="Tokunaga M."/>
        </authorList>
    </citation>
    <scope>IDENTIFICATION</scope>
</reference>
<reference key="10">
    <citation type="journal article" date="2013" name="J. Proteome Res.">
        <title>Toward a comprehensive characterization of a human cancer cell phosphoproteome.</title>
        <authorList>
            <person name="Zhou H."/>
            <person name="Di Palma S."/>
            <person name="Preisinger C."/>
            <person name="Peng M."/>
            <person name="Polat A.N."/>
            <person name="Heck A.J."/>
            <person name="Mohammed S."/>
        </authorList>
    </citation>
    <scope>IDENTIFICATION BY MASS SPECTROMETRY [LARGE SCALE ANALYSIS]</scope>
    <source>
        <tissue>Cervix carcinoma</tissue>
    </source>
</reference>
<reference key="11">
    <citation type="journal article" date="2016" name="J. Biol. Chem.">
        <title>Caprin-2 positively regulates CDK14/Cyclin Y-mediated LRP5/6 constitutive phosphorylation.</title>
        <authorList>
            <person name="Wang X."/>
            <person name="Jia Y."/>
            <person name="Fei C."/>
            <person name="Song X."/>
            <person name="Li L."/>
        </authorList>
    </citation>
    <scope>FUNCTION</scope>
    <scope>IDENTIFICATION IN A COMPLEX WITH LRP6; CCNY AND CDK14</scope>
    <scope>SUBCELLULAR LOCATION</scope>
</reference>
<reference key="12">
    <citation type="journal article" date="2014" name="J. Biol. Chem.">
        <title>Structural insights into the C1q domain of Caprin-2 in canonical Wnt signaling.</title>
        <authorList>
            <person name="Miao H."/>
            <person name="Jia Y."/>
            <person name="Xie S."/>
            <person name="Wang X."/>
            <person name="Zhao J."/>
            <person name="Chu Y."/>
            <person name="Zhou Z."/>
            <person name="Shi Z."/>
            <person name="Song X."/>
            <person name="Li L."/>
        </authorList>
    </citation>
    <scope>X-RAY CRYSTALLOGRAPHY (1.49 ANGSTROMS) OF 996-1127 IN COMPLEX WITH CALCIUM</scope>
    <scope>SUBUNIT</scope>
    <scope>INTERACTION WITH LRP6</scope>
    <scope>MUTAGENESIS OF ILE-1048; ASP-1078; GLU-1084; ILE-1091; TRP-1114 AND TYR-1122</scope>
</reference>
<keyword id="KW-0002">3D-structure</keyword>
<keyword id="KW-0025">Alternative splicing</keyword>
<keyword id="KW-0106">Calcium</keyword>
<keyword id="KW-1003">Cell membrane</keyword>
<keyword id="KW-0175">Coiled coil</keyword>
<keyword id="KW-0963">Cytoplasm</keyword>
<keyword id="KW-0221">Differentiation</keyword>
<keyword id="KW-0341">Growth regulation</keyword>
<keyword id="KW-0472">Membrane</keyword>
<keyword id="KW-0479">Metal-binding</keyword>
<keyword id="KW-0496">Mitochondrion</keyword>
<keyword id="KW-0597">Phosphoprotein</keyword>
<keyword id="KW-0652">Protein synthesis inhibitor</keyword>
<keyword id="KW-1267">Proteomics identification</keyword>
<keyword id="KW-1185">Reference proteome</keyword>
<keyword id="KW-0694">RNA-binding</keyword>
<proteinExistence type="evidence at protein level"/>
<accession>Q6IMN6</accession>
<accession>E4NKG2</accession>
<accession>Q149P6</accession>
<accession>Q149P7</accession>
<accession>Q6IMN5</accession>
<accession>Q7Z371</accession>
<accession>Q8TE70</accession>
<accession>Q8TE71</accession>
<accession>Q96RN6</accession>
<accession>Q9H667</accession>
<accession>Q9HAL4</accession>
<gene>
    <name evidence="21" type="primary">CAPRIN2</name>
    <name type="synonym">C1QDC1</name>
    <name evidence="23" type="synonym">EEG1</name>
    <name type="synonym">KIAA1873</name>
    <name type="synonym">RNG140</name>
</gene>
<dbReference type="EMBL" id="AY074490">
    <property type="protein sequence ID" value="AAL71549.1"/>
    <property type="molecule type" value="mRNA"/>
</dbReference>
<dbReference type="EMBL" id="AY074491">
    <property type="protein sequence ID" value="AAL71550.1"/>
    <property type="molecule type" value="mRNA"/>
</dbReference>
<dbReference type="EMBL" id="AC010198">
    <property type="status" value="NOT_ANNOTATED_CDS"/>
    <property type="molecule type" value="Genomic_DNA"/>
</dbReference>
<dbReference type="EMBL" id="BC066295">
    <property type="protein sequence ID" value="AAH66295.1"/>
    <property type="molecule type" value="mRNA"/>
</dbReference>
<dbReference type="EMBL" id="BC111007">
    <property type="protein sequence ID" value="AAI11008.1"/>
    <property type="molecule type" value="mRNA"/>
</dbReference>
<dbReference type="EMBL" id="BC117672">
    <property type="protein sequence ID" value="AAI17673.1"/>
    <property type="molecule type" value="mRNA"/>
</dbReference>
<dbReference type="EMBL" id="BC117673">
    <property type="protein sequence ID" value="AAI17674.1"/>
    <property type="molecule type" value="mRNA"/>
</dbReference>
<dbReference type="EMBL" id="AK021453">
    <property type="protein sequence ID" value="BAB13830.1"/>
    <property type="molecule type" value="mRNA"/>
</dbReference>
<dbReference type="EMBL" id="AK026222">
    <property type="protein sequence ID" value="BAB15398.1"/>
    <property type="molecule type" value="mRNA"/>
</dbReference>
<dbReference type="EMBL" id="AF326778">
    <property type="protein sequence ID" value="AAK83153.1"/>
    <property type="status" value="ALT_INIT"/>
    <property type="molecule type" value="mRNA"/>
</dbReference>
<dbReference type="EMBL" id="BX538080">
    <property type="protein sequence ID" value="CAD98004.1"/>
    <property type="molecule type" value="mRNA"/>
</dbReference>
<dbReference type="EMBL" id="BK001102">
    <property type="protein sequence ID" value="DAA01119.1"/>
    <property type="molecule type" value="mRNA"/>
</dbReference>
<dbReference type="EMBL" id="BK001103">
    <property type="protein sequence ID" value="DAA01120.1"/>
    <property type="molecule type" value="mRNA"/>
</dbReference>
<dbReference type="EMBL" id="BR000870">
    <property type="protein sequence ID" value="FAA00695.1"/>
    <property type="molecule type" value="mRNA"/>
</dbReference>
<dbReference type="CCDS" id="CCDS41766.2">
    <molecule id="Q6IMN6-3"/>
</dbReference>
<dbReference type="CCDS" id="CCDS55816.1">
    <molecule id="Q6IMN6-10"/>
</dbReference>
<dbReference type="CCDS" id="CCDS8720.1">
    <molecule id="Q6IMN6-2"/>
</dbReference>
<dbReference type="CCDS" id="CCDS91672.1">
    <molecule id="Q6IMN6-4"/>
</dbReference>
<dbReference type="RefSeq" id="NP_001002259.1">
    <molecule id="Q6IMN6-1"/>
    <property type="nucleotide sequence ID" value="NM_001002259.3"/>
</dbReference>
<dbReference type="RefSeq" id="NP_001193785.1">
    <molecule id="Q6IMN6-10"/>
    <property type="nucleotide sequence ID" value="NM_001206856.3"/>
</dbReference>
<dbReference type="RefSeq" id="NP_001306771.1">
    <property type="nucleotide sequence ID" value="NM_001319842.1"/>
</dbReference>
<dbReference type="RefSeq" id="NP_001306772.1">
    <molecule id="Q6IMN6-9"/>
    <property type="nucleotide sequence ID" value="NM_001319843.2"/>
</dbReference>
<dbReference type="RefSeq" id="NP_001372457.1">
    <molecule id="Q6IMN6-4"/>
    <property type="nucleotide sequence ID" value="NM_001385528.1"/>
</dbReference>
<dbReference type="RefSeq" id="NP_001372458.1">
    <molecule id="Q6IMN6-4"/>
    <property type="nucleotide sequence ID" value="NM_001385529.1"/>
</dbReference>
<dbReference type="RefSeq" id="NP_076414.2">
    <molecule id="Q6IMN6-2"/>
    <property type="nucleotide sequence ID" value="NM_023925.4"/>
</dbReference>
<dbReference type="RefSeq" id="NP_115532.3">
    <molecule id="Q6IMN6-3"/>
    <property type="nucleotide sequence ID" value="NM_032156.5"/>
</dbReference>
<dbReference type="RefSeq" id="XP_006719210.1">
    <molecule id="Q6IMN6-7"/>
    <property type="nucleotide sequence ID" value="XM_006719147.4"/>
</dbReference>
<dbReference type="PDB" id="4OUL">
    <property type="method" value="X-ray"/>
    <property type="resolution" value="1.95 A"/>
    <property type="chains" value="A/B/C/D/E/F=996-1127"/>
</dbReference>
<dbReference type="PDB" id="4OUM">
    <property type="method" value="X-ray"/>
    <property type="resolution" value="1.49 A"/>
    <property type="chains" value="A=996-1127"/>
</dbReference>
<dbReference type="PDB" id="5J97">
    <property type="method" value="X-ray"/>
    <property type="resolution" value="2.55 A"/>
    <property type="chains" value="A/B=199-329"/>
</dbReference>
<dbReference type="PDB" id="8K9C">
    <property type="method" value="X-ray"/>
    <property type="resolution" value="2.32 A"/>
    <property type="chains" value="A/B=102-351"/>
</dbReference>
<dbReference type="PDB" id="8K9D">
    <property type="method" value="X-ray"/>
    <property type="resolution" value="3.30 A"/>
    <property type="chains" value="A=102-351"/>
</dbReference>
<dbReference type="PDBsum" id="4OUL"/>
<dbReference type="PDBsum" id="4OUM"/>
<dbReference type="PDBsum" id="5J97"/>
<dbReference type="PDBsum" id="8K9C"/>
<dbReference type="PDBsum" id="8K9D"/>
<dbReference type="SMR" id="Q6IMN6"/>
<dbReference type="BioGRID" id="122431">
    <property type="interactions" value="15"/>
</dbReference>
<dbReference type="FunCoup" id="Q6IMN6">
    <property type="interactions" value="1676"/>
</dbReference>
<dbReference type="IntAct" id="Q6IMN6">
    <property type="interactions" value="9"/>
</dbReference>
<dbReference type="STRING" id="9606.ENSP00000298892"/>
<dbReference type="GlyCosmos" id="Q6IMN6">
    <property type="glycosylation" value="1 site, 1 glycan"/>
</dbReference>
<dbReference type="GlyGen" id="Q6IMN6">
    <property type="glycosylation" value="4 sites, 1 O-linked glycan (3 sites)"/>
</dbReference>
<dbReference type="iPTMnet" id="Q6IMN6"/>
<dbReference type="PhosphoSitePlus" id="Q6IMN6"/>
<dbReference type="BioMuta" id="CAPRIN2"/>
<dbReference type="DMDM" id="74748798"/>
<dbReference type="jPOST" id="Q6IMN6"/>
<dbReference type="MassIVE" id="Q6IMN6"/>
<dbReference type="PaxDb" id="9606-ENSP00000298892"/>
<dbReference type="PeptideAtlas" id="Q6IMN6"/>
<dbReference type="ProteomicsDB" id="66433">
    <molecule id="Q6IMN6-1"/>
</dbReference>
<dbReference type="ProteomicsDB" id="66434">
    <molecule id="Q6IMN6-10"/>
</dbReference>
<dbReference type="ProteomicsDB" id="66435">
    <molecule id="Q6IMN6-2"/>
</dbReference>
<dbReference type="ProteomicsDB" id="66436">
    <molecule id="Q6IMN6-3"/>
</dbReference>
<dbReference type="ProteomicsDB" id="66437">
    <molecule id="Q6IMN6-4"/>
</dbReference>
<dbReference type="ProteomicsDB" id="66438">
    <molecule id="Q6IMN6-5"/>
</dbReference>
<dbReference type="ProteomicsDB" id="66439">
    <molecule id="Q6IMN6-6"/>
</dbReference>
<dbReference type="ProteomicsDB" id="66440">
    <molecule id="Q6IMN6-7"/>
</dbReference>
<dbReference type="ProteomicsDB" id="66441">
    <molecule id="Q6IMN6-9"/>
</dbReference>
<dbReference type="Antibodypedia" id="42424">
    <property type="antibodies" value="95 antibodies from 20 providers"/>
</dbReference>
<dbReference type="DNASU" id="65981"/>
<dbReference type="Ensembl" id="ENST00000298892.9">
    <molecule id="Q6IMN6-2"/>
    <property type="protein sequence ID" value="ENSP00000298892.5"/>
    <property type="gene ID" value="ENSG00000110888.19"/>
</dbReference>
<dbReference type="Ensembl" id="ENST00000395805.6">
    <molecule id="Q6IMN6-10"/>
    <property type="protein sequence ID" value="ENSP00000379150.2"/>
    <property type="gene ID" value="ENSG00000110888.19"/>
</dbReference>
<dbReference type="Ensembl" id="ENST00000417045.5">
    <molecule id="Q6IMN6-3"/>
    <property type="protein sequence ID" value="ENSP00000391479.1"/>
    <property type="gene ID" value="ENSG00000110888.19"/>
</dbReference>
<dbReference type="Ensembl" id="ENST00000454014.6">
    <molecule id="Q6IMN6-5"/>
    <property type="protein sequence ID" value="ENSP00000403876.2"/>
    <property type="gene ID" value="ENSG00000110888.19"/>
</dbReference>
<dbReference type="Ensembl" id="ENST00000684863.1">
    <molecule id="Q6IMN6-4"/>
    <property type="protein sequence ID" value="ENSP00000510181.1"/>
    <property type="gene ID" value="ENSG00000110888.19"/>
</dbReference>
<dbReference type="Ensembl" id="ENST00000687797.1">
    <molecule id="Q6IMN6-1"/>
    <property type="protein sequence ID" value="ENSP00000510623.1"/>
    <property type="gene ID" value="ENSG00000110888.19"/>
</dbReference>
<dbReference type="GeneID" id="65981"/>
<dbReference type="KEGG" id="hsa:65981"/>
<dbReference type="UCSC" id="uc001rjh.2">
    <molecule id="Q6IMN6-1"/>
    <property type="organism name" value="human"/>
</dbReference>
<dbReference type="AGR" id="HGNC:21259"/>
<dbReference type="CTD" id="65981"/>
<dbReference type="DisGeNET" id="65981"/>
<dbReference type="GeneCards" id="CAPRIN2"/>
<dbReference type="HGNC" id="HGNC:21259">
    <property type="gene designation" value="CAPRIN2"/>
</dbReference>
<dbReference type="HPA" id="ENSG00000110888">
    <property type="expression patterns" value="Low tissue specificity"/>
</dbReference>
<dbReference type="MIM" id="610375">
    <property type="type" value="gene"/>
</dbReference>
<dbReference type="neXtProt" id="NX_Q6IMN6"/>
<dbReference type="OpenTargets" id="ENSG00000110888"/>
<dbReference type="PharmGKB" id="PA162381044"/>
<dbReference type="VEuPathDB" id="HostDB:ENSG00000110888"/>
<dbReference type="eggNOG" id="ENOG502QQ53">
    <property type="taxonomic scope" value="Eukaryota"/>
</dbReference>
<dbReference type="GeneTree" id="ENSGT00940000153438"/>
<dbReference type="HOGENOM" id="CLU_009305_0_0_1"/>
<dbReference type="InParanoid" id="Q6IMN6"/>
<dbReference type="OMA" id="NHNQHGE"/>
<dbReference type="OrthoDB" id="10062814at2759"/>
<dbReference type="PAN-GO" id="Q6IMN6">
    <property type="GO annotations" value="3 GO annotations based on evolutionary models"/>
</dbReference>
<dbReference type="PhylomeDB" id="Q6IMN6"/>
<dbReference type="TreeFam" id="TF329471"/>
<dbReference type="PathwayCommons" id="Q6IMN6"/>
<dbReference type="SignaLink" id="Q6IMN6"/>
<dbReference type="SIGNOR" id="Q6IMN6"/>
<dbReference type="BioGRID-ORCS" id="65981">
    <property type="hits" value="24 hits in 1152 CRISPR screens"/>
</dbReference>
<dbReference type="CD-CODE" id="F85A2E29">
    <property type="entry name" value="IMP1 RNP granule"/>
</dbReference>
<dbReference type="ChiTaRS" id="CAPRIN2">
    <property type="organism name" value="human"/>
</dbReference>
<dbReference type="EvolutionaryTrace" id="Q6IMN6"/>
<dbReference type="GeneWiki" id="CAPRIN2"/>
<dbReference type="GenomeRNAi" id="65981"/>
<dbReference type="Pharos" id="Q6IMN6">
    <property type="development level" value="Tbio"/>
</dbReference>
<dbReference type="PRO" id="PR:Q6IMN6"/>
<dbReference type="Proteomes" id="UP000005640">
    <property type="component" value="Chromosome 12"/>
</dbReference>
<dbReference type="RNAct" id="Q6IMN6">
    <property type="molecule type" value="protein"/>
</dbReference>
<dbReference type="Bgee" id="ENSG00000110888">
    <property type="expression patterns" value="Expressed in dorsal root ganglion and 202 other cell types or tissues"/>
</dbReference>
<dbReference type="ExpressionAtlas" id="Q6IMN6">
    <property type="expression patterns" value="baseline and differential"/>
</dbReference>
<dbReference type="GO" id="GO:0005813">
    <property type="term" value="C:centrosome"/>
    <property type="evidence" value="ECO:0000314"/>
    <property type="project" value="HPA"/>
</dbReference>
<dbReference type="GO" id="GO:0005737">
    <property type="term" value="C:cytoplasm"/>
    <property type="evidence" value="ECO:0000314"/>
    <property type="project" value="UniProtKB"/>
</dbReference>
<dbReference type="GO" id="GO:0005829">
    <property type="term" value="C:cytosol"/>
    <property type="evidence" value="ECO:0000314"/>
    <property type="project" value="HPA"/>
</dbReference>
<dbReference type="GO" id="GO:0005739">
    <property type="term" value="C:mitochondrion"/>
    <property type="evidence" value="ECO:0000314"/>
    <property type="project" value="UniProtKB"/>
</dbReference>
<dbReference type="GO" id="GO:0005654">
    <property type="term" value="C:nucleoplasm"/>
    <property type="evidence" value="ECO:0000314"/>
    <property type="project" value="HPA"/>
</dbReference>
<dbReference type="GO" id="GO:0005886">
    <property type="term" value="C:plasma membrane"/>
    <property type="evidence" value="ECO:0007669"/>
    <property type="project" value="UniProtKB-SubCell"/>
</dbReference>
<dbReference type="GO" id="GO:0043235">
    <property type="term" value="C:receptor complex"/>
    <property type="evidence" value="ECO:0000314"/>
    <property type="project" value="BHF-UCL"/>
</dbReference>
<dbReference type="GO" id="GO:0046872">
    <property type="term" value="F:metal ion binding"/>
    <property type="evidence" value="ECO:0007669"/>
    <property type="project" value="UniProtKB-KW"/>
</dbReference>
<dbReference type="GO" id="GO:0003723">
    <property type="term" value="F:RNA binding"/>
    <property type="evidence" value="ECO:0007669"/>
    <property type="project" value="UniProtKB-KW"/>
</dbReference>
<dbReference type="GO" id="GO:0005102">
    <property type="term" value="F:signaling receptor binding"/>
    <property type="evidence" value="ECO:0000353"/>
    <property type="project" value="BHF-UCL"/>
</dbReference>
<dbReference type="GO" id="GO:0030154">
    <property type="term" value="P:cell differentiation"/>
    <property type="evidence" value="ECO:0007669"/>
    <property type="project" value="UniProtKB-KW"/>
</dbReference>
<dbReference type="GO" id="GO:0009950">
    <property type="term" value="P:dorsal/ventral axis specification"/>
    <property type="evidence" value="ECO:0000250"/>
    <property type="project" value="BHF-UCL"/>
</dbReference>
<dbReference type="GO" id="GO:0030308">
    <property type="term" value="P:negative regulation of cell growth"/>
    <property type="evidence" value="ECO:0000314"/>
    <property type="project" value="UniProtKB"/>
</dbReference>
<dbReference type="GO" id="GO:0017148">
    <property type="term" value="P:negative regulation of translation"/>
    <property type="evidence" value="ECO:0007669"/>
    <property type="project" value="UniProtKB-KW"/>
</dbReference>
<dbReference type="GO" id="GO:0090263">
    <property type="term" value="P:positive regulation of canonical Wnt signaling pathway"/>
    <property type="evidence" value="ECO:0000314"/>
    <property type="project" value="BHF-UCL"/>
</dbReference>
<dbReference type="GO" id="GO:0050775">
    <property type="term" value="P:positive regulation of dendrite morphogenesis"/>
    <property type="evidence" value="ECO:0000250"/>
    <property type="project" value="UniProtKB"/>
</dbReference>
<dbReference type="GO" id="GO:0061003">
    <property type="term" value="P:positive regulation of dendritic spine morphogenesis"/>
    <property type="evidence" value="ECO:0000250"/>
    <property type="project" value="UniProtKB"/>
</dbReference>
<dbReference type="GO" id="GO:0045944">
    <property type="term" value="P:positive regulation of transcription by RNA polymerase II"/>
    <property type="evidence" value="ECO:0000314"/>
    <property type="project" value="BHF-UCL"/>
</dbReference>
<dbReference type="FunFam" id="2.60.120.40:FF:000003">
    <property type="entry name" value="caprin-2 isoform X1"/>
    <property type="match status" value="1"/>
</dbReference>
<dbReference type="Gene3D" id="2.60.120.40">
    <property type="match status" value="1"/>
</dbReference>
<dbReference type="InterPro" id="IPR001073">
    <property type="entry name" value="C1q_dom"/>
</dbReference>
<dbReference type="InterPro" id="IPR028816">
    <property type="entry name" value="Caprin"/>
</dbReference>
<dbReference type="InterPro" id="IPR022070">
    <property type="entry name" value="Caprin-1_C"/>
</dbReference>
<dbReference type="InterPro" id="IPR041637">
    <property type="entry name" value="Caprin-1_dimer"/>
</dbReference>
<dbReference type="InterPro" id="IPR008983">
    <property type="entry name" value="Tumour_necrosis_fac-like_dom"/>
</dbReference>
<dbReference type="PANTHER" id="PTHR22922:SF5">
    <property type="entry name" value="CAPRIN-2"/>
    <property type="match status" value="1"/>
</dbReference>
<dbReference type="PANTHER" id="PTHR22922">
    <property type="entry name" value="GPI-ANCHORED PROTEIN P137"/>
    <property type="match status" value="1"/>
</dbReference>
<dbReference type="Pfam" id="PF00386">
    <property type="entry name" value="C1q"/>
    <property type="match status" value="1"/>
</dbReference>
<dbReference type="Pfam" id="PF12287">
    <property type="entry name" value="Caprin-1_C"/>
    <property type="match status" value="1"/>
</dbReference>
<dbReference type="Pfam" id="PF18293">
    <property type="entry name" value="Caprin-1_dimer"/>
    <property type="match status" value="1"/>
</dbReference>
<dbReference type="PRINTS" id="PR00007">
    <property type="entry name" value="COMPLEMNTC1Q"/>
</dbReference>
<dbReference type="SMART" id="SM00110">
    <property type="entry name" value="C1Q"/>
    <property type="match status" value="1"/>
</dbReference>
<dbReference type="SUPFAM" id="SSF49842">
    <property type="entry name" value="TNF-like"/>
    <property type="match status" value="1"/>
</dbReference>
<dbReference type="PROSITE" id="PS50871">
    <property type="entry name" value="C1Q"/>
    <property type="match status" value="1"/>
</dbReference>
<evidence type="ECO:0000250" key="1">
    <source>
        <dbReference type="UniProtKB" id="Q05A80"/>
    </source>
</evidence>
<evidence type="ECO:0000255" key="2"/>
<evidence type="ECO:0000255" key="3">
    <source>
        <dbReference type="PROSITE-ProRule" id="PRU00368"/>
    </source>
</evidence>
<evidence type="ECO:0000256" key="4">
    <source>
        <dbReference type="SAM" id="MobiDB-lite"/>
    </source>
</evidence>
<evidence type="ECO:0000269" key="5">
    <source>
    </source>
</evidence>
<evidence type="ECO:0000269" key="6">
    <source>
    </source>
</evidence>
<evidence type="ECO:0000269" key="7">
    <source>
    </source>
</evidence>
<evidence type="ECO:0000269" key="8">
    <source>
    </source>
</evidence>
<evidence type="ECO:0000269" key="9">
    <source>
    </source>
</evidence>
<evidence type="ECO:0000269" key="10">
    <source>
    </source>
</evidence>
<evidence type="ECO:0000269" key="11">
    <source>
    </source>
</evidence>
<evidence type="ECO:0000269" key="12">
    <source ref="5"/>
</evidence>
<evidence type="ECO:0000303" key="13">
    <source>
    </source>
</evidence>
<evidence type="ECO:0000303" key="14">
    <source>
    </source>
</evidence>
<evidence type="ECO:0000303" key="15">
    <source>
    </source>
</evidence>
<evidence type="ECO:0000303" key="16">
    <source>
    </source>
</evidence>
<evidence type="ECO:0000303" key="17">
    <source ref="5"/>
</evidence>
<evidence type="ECO:0000305" key="18"/>
<evidence type="ECO:0000305" key="19">
    <source>
    </source>
</evidence>
<evidence type="ECO:0000312" key="20">
    <source>
        <dbReference type="EMBL" id="AAH66295.1"/>
    </source>
</evidence>
<evidence type="ECO:0000312" key="21">
    <source>
        <dbReference type="EMBL" id="AAI17673.1"/>
    </source>
</evidence>
<evidence type="ECO:0000312" key="22">
    <source>
        <dbReference type="EMBL" id="AAK83153.1"/>
    </source>
</evidence>
<evidence type="ECO:0000312" key="23">
    <source>
        <dbReference type="EMBL" id="AAL71549.1"/>
    </source>
</evidence>
<evidence type="ECO:0000312" key="24">
    <source>
        <dbReference type="EMBL" id="BAB13830.1"/>
    </source>
</evidence>
<evidence type="ECO:0000312" key="25">
    <source>
        <dbReference type="EMBL" id="BAB15398.1"/>
    </source>
</evidence>
<evidence type="ECO:0000312" key="26">
    <source>
        <dbReference type="EMBL" id="DAA01119.1"/>
    </source>
</evidence>
<evidence type="ECO:0007744" key="27">
    <source>
        <dbReference type="PDB" id="4OUL"/>
    </source>
</evidence>
<evidence type="ECO:0007829" key="28">
    <source>
        <dbReference type="PDB" id="4OUM"/>
    </source>
</evidence>
<evidence type="ECO:0007829" key="29">
    <source>
        <dbReference type="PDB" id="8K9C"/>
    </source>
</evidence>
<evidence type="ECO:0007829" key="30">
    <source>
        <dbReference type="PDB" id="8K9D"/>
    </source>
</evidence>
<sequence>MEVQVSQASLGFELTSVEKSLREWSRLSREVIAWLCPSSPNFILNFPPPPSASSVSMVQLFSSPFGYQSPSGHSEEEREGNMKSAKPQVNHSQHGESQRALSPLQSTLSSAASPSQAYETYIENGLICLKHKIRNIEKKKLKLEDYKDRLKSGEHLNPDQLEAVEKYEEVLHNLEFAKELQKTFSGLSLDLLKAQKKAQRREHMLKLEAEKKKLRTILQVQYVLQNLTQEHVQKDFKGGLNGAVYLPSKELDYLIKFSKLTCPERNESLSVEDQMEQSSLYFWDLLEGSEKAVVGTTYKHLKDLLSKLLNSGYFESIPVPKNAKEKEVPLEEEMLIQSEKKTQLSKTESVKESESLMEFAQPEIQPQEFLNRRYMTEVDYSNKQGEEQPWEADYARKPNLPKRWDMLTEPDGQEKKQESFKSWEASGKHQEVSKPAVSLEQRKQDTSKLRSTLPEEQKKQEISKSKPSPSQWKQDTPKSKAGYVQEEQKKQETPKLWPVQLQKEQDPKKQTPKSWTPSMQSEQNTTKSWTTPMCEEQDSKQPETPKSWENNVESQKHSLTSQSQISPKSWGVATASLIPNDQLLPRKLNTEPKDVPKPVHQPVGSSSTLPKDPVLRKEKLQDLMTQIQGTCNFMQESVLDFDKPSSAIPTSQPPSATPGSPVASKEQNLSSQSDFLQEPLQATSSPVTCSSNACLVTTDQASSGSETEFMTSETPEAAIPPGKQPSSLASPNPPMAKGSEQGFQSPPASSSSVTINTAPFQAMQTVFNVNAPLPPRKEQEIKESPYSPGYNQSFTTASTQTPPQCQLPSIHVEQTVHSQETAANYHPDGTIQVSNGSLAFYPAQTNVFPRPTQPFVNSRGSVRGCTRGGRLITNSYRSPGGYKGFDTYRGLPSISNGNYSQLQFQAREYSGAPYSQRDNFQQCYKRGGTSGGPRANSRAGWSDSSQVSSPERDNETFNSGDSGQGDSRSMTPVDVPVTNPAATILPVHVYPLPQQMRVAFSAARTSNLAPGTLDQPIVFDLLLNNLGETFDLQLGRFNCPVNGTYVFIFHMLKLAVNVPLYVNLMKNEEVLVSAYANDGAPDHETASNHAILQLFQGDQIWLRLHRGAIYGSSWKYSTFSGYLLYQD</sequence>
<name>CAPR2_HUMAN</name>